<keyword id="KW-0002">3D-structure</keyword>
<keyword id="KW-0007">Acetylation</keyword>
<keyword id="KW-0010">Activator</keyword>
<keyword id="KW-0175">Coiled coil</keyword>
<keyword id="KW-0539">Nucleus</keyword>
<keyword id="KW-1185">Reference proteome</keyword>
<keyword id="KW-0804">Transcription</keyword>
<keyword id="KW-0805">Transcription regulation</keyword>
<reference key="1">
    <citation type="journal article" date="2005" name="Science">
        <title>The transcriptional landscape of the mammalian genome.</title>
        <authorList>
            <person name="Carninci P."/>
            <person name="Kasukawa T."/>
            <person name="Katayama S."/>
            <person name="Gough J."/>
            <person name="Frith M.C."/>
            <person name="Maeda N."/>
            <person name="Oyama R."/>
            <person name="Ravasi T."/>
            <person name="Lenhard B."/>
            <person name="Wells C."/>
            <person name="Kodzius R."/>
            <person name="Shimokawa K."/>
            <person name="Bajic V.B."/>
            <person name="Brenner S.E."/>
            <person name="Batalov S."/>
            <person name="Forrest A.R."/>
            <person name="Zavolan M."/>
            <person name="Davis M.J."/>
            <person name="Wilming L.G."/>
            <person name="Aidinis V."/>
            <person name="Allen J.E."/>
            <person name="Ambesi-Impiombato A."/>
            <person name="Apweiler R."/>
            <person name="Aturaliya R.N."/>
            <person name="Bailey T.L."/>
            <person name="Bansal M."/>
            <person name="Baxter L."/>
            <person name="Beisel K.W."/>
            <person name="Bersano T."/>
            <person name="Bono H."/>
            <person name="Chalk A.M."/>
            <person name="Chiu K.P."/>
            <person name="Choudhary V."/>
            <person name="Christoffels A."/>
            <person name="Clutterbuck D.R."/>
            <person name="Crowe M.L."/>
            <person name="Dalla E."/>
            <person name="Dalrymple B.P."/>
            <person name="de Bono B."/>
            <person name="Della Gatta G."/>
            <person name="di Bernardo D."/>
            <person name="Down T."/>
            <person name="Engstrom P."/>
            <person name="Fagiolini M."/>
            <person name="Faulkner G."/>
            <person name="Fletcher C.F."/>
            <person name="Fukushima T."/>
            <person name="Furuno M."/>
            <person name="Futaki S."/>
            <person name="Gariboldi M."/>
            <person name="Georgii-Hemming P."/>
            <person name="Gingeras T.R."/>
            <person name="Gojobori T."/>
            <person name="Green R.E."/>
            <person name="Gustincich S."/>
            <person name="Harbers M."/>
            <person name="Hayashi Y."/>
            <person name="Hensch T.K."/>
            <person name="Hirokawa N."/>
            <person name="Hill D."/>
            <person name="Huminiecki L."/>
            <person name="Iacono M."/>
            <person name="Ikeo K."/>
            <person name="Iwama A."/>
            <person name="Ishikawa T."/>
            <person name="Jakt M."/>
            <person name="Kanapin A."/>
            <person name="Katoh M."/>
            <person name="Kawasawa Y."/>
            <person name="Kelso J."/>
            <person name="Kitamura H."/>
            <person name="Kitano H."/>
            <person name="Kollias G."/>
            <person name="Krishnan S.P."/>
            <person name="Kruger A."/>
            <person name="Kummerfeld S.K."/>
            <person name="Kurochkin I.V."/>
            <person name="Lareau L.F."/>
            <person name="Lazarevic D."/>
            <person name="Lipovich L."/>
            <person name="Liu J."/>
            <person name="Liuni S."/>
            <person name="McWilliam S."/>
            <person name="Madan Babu M."/>
            <person name="Madera M."/>
            <person name="Marchionni L."/>
            <person name="Matsuda H."/>
            <person name="Matsuzawa S."/>
            <person name="Miki H."/>
            <person name="Mignone F."/>
            <person name="Miyake S."/>
            <person name="Morris K."/>
            <person name="Mottagui-Tabar S."/>
            <person name="Mulder N."/>
            <person name="Nakano N."/>
            <person name="Nakauchi H."/>
            <person name="Ng P."/>
            <person name="Nilsson R."/>
            <person name="Nishiguchi S."/>
            <person name="Nishikawa S."/>
            <person name="Nori F."/>
            <person name="Ohara O."/>
            <person name="Okazaki Y."/>
            <person name="Orlando V."/>
            <person name="Pang K.C."/>
            <person name="Pavan W.J."/>
            <person name="Pavesi G."/>
            <person name="Pesole G."/>
            <person name="Petrovsky N."/>
            <person name="Piazza S."/>
            <person name="Reed J."/>
            <person name="Reid J.F."/>
            <person name="Ring B.Z."/>
            <person name="Ringwald M."/>
            <person name="Rost B."/>
            <person name="Ruan Y."/>
            <person name="Salzberg S.L."/>
            <person name="Sandelin A."/>
            <person name="Schneider C."/>
            <person name="Schoenbach C."/>
            <person name="Sekiguchi K."/>
            <person name="Semple C.A."/>
            <person name="Seno S."/>
            <person name="Sessa L."/>
            <person name="Sheng Y."/>
            <person name="Shibata Y."/>
            <person name="Shimada H."/>
            <person name="Shimada K."/>
            <person name="Silva D."/>
            <person name="Sinclair B."/>
            <person name="Sperling S."/>
            <person name="Stupka E."/>
            <person name="Sugiura K."/>
            <person name="Sultana R."/>
            <person name="Takenaka Y."/>
            <person name="Taki K."/>
            <person name="Tammoja K."/>
            <person name="Tan S.L."/>
            <person name="Tang S."/>
            <person name="Taylor M.S."/>
            <person name="Tegner J."/>
            <person name="Teichmann S.A."/>
            <person name="Ueda H.R."/>
            <person name="van Nimwegen E."/>
            <person name="Verardo R."/>
            <person name="Wei C.L."/>
            <person name="Yagi K."/>
            <person name="Yamanishi H."/>
            <person name="Zabarovsky E."/>
            <person name="Zhu S."/>
            <person name="Zimmer A."/>
            <person name="Hide W."/>
            <person name="Bult C."/>
            <person name="Grimmond S.M."/>
            <person name="Teasdale R.D."/>
            <person name="Liu E.T."/>
            <person name="Brusic V."/>
            <person name="Quackenbush J."/>
            <person name="Wahlestedt C."/>
            <person name="Mattick J.S."/>
            <person name="Hume D.A."/>
            <person name="Kai C."/>
            <person name="Sasaki D."/>
            <person name="Tomaru Y."/>
            <person name="Fukuda S."/>
            <person name="Kanamori-Katayama M."/>
            <person name="Suzuki M."/>
            <person name="Aoki J."/>
            <person name="Arakawa T."/>
            <person name="Iida J."/>
            <person name="Imamura K."/>
            <person name="Itoh M."/>
            <person name="Kato T."/>
            <person name="Kawaji H."/>
            <person name="Kawagashira N."/>
            <person name="Kawashima T."/>
            <person name="Kojima M."/>
            <person name="Kondo S."/>
            <person name="Konno H."/>
            <person name="Nakano K."/>
            <person name="Ninomiya N."/>
            <person name="Nishio T."/>
            <person name="Okada M."/>
            <person name="Plessy C."/>
            <person name="Shibata K."/>
            <person name="Shiraki T."/>
            <person name="Suzuki S."/>
            <person name="Tagami M."/>
            <person name="Waki K."/>
            <person name="Watahiki A."/>
            <person name="Okamura-Oho Y."/>
            <person name="Suzuki H."/>
            <person name="Kawai J."/>
            <person name="Hayashizaki Y."/>
        </authorList>
    </citation>
    <scope>NUCLEOTIDE SEQUENCE [LARGE SCALE MRNA]</scope>
    <source>
        <strain>C57BL/6J</strain>
        <strain>DBA/2J</strain>
        <tissue>Liver</tissue>
        <tissue>Pancreas</tissue>
    </source>
</reference>
<reference key="2">
    <citation type="journal article" date="2004" name="Genome Res.">
        <title>The status, quality, and expansion of the NIH full-length cDNA project: the Mammalian Gene Collection (MGC).</title>
        <authorList>
            <consortium name="The MGC Project Team"/>
        </authorList>
    </citation>
    <scope>NUCLEOTIDE SEQUENCE [LARGE SCALE MRNA]</scope>
    <source>
        <strain>Czech II</strain>
        <tissue>Mammary tumor</tissue>
    </source>
</reference>
<reference key="3">
    <citation type="journal article" date="2010" name="Cell">
        <title>A tissue-specific atlas of mouse protein phosphorylation and expression.</title>
        <authorList>
            <person name="Huttlin E.L."/>
            <person name="Jedrychowski M.P."/>
            <person name="Elias J.E."/>
            <person name="Goswami T."/>
            <person name="Rad R."/>
            <person name="Beausoleil S.A."/>
            <person name="Villen J."/>
            <person name="Haas W."/>
            <person name="Sowa M.E."/>
            <person name="Gygi S.P."/>
        </authorList>
    </citation>
    <scope>IDENTIFICATION BY MASS SPECTROMETRY [LARGE SCALE ANALYSIS]</scope>
    <source>
        <tissue>Brain</tissue>
        <tissue>Kidney</tissue>
        <tissue>Lung</tissue>
        <tissue>Spleen</tissue>
        <tissue>Testis</tissue>
    </source>
</reference>
<sequence>MSTPPLAPTGMASGPFGGPQAQQAAREVNTATLCRIGQETVQDIVYRTMEIFQLLRNMQLPNGVTYHTGTYQDRLTKLQDHLRQLSILFRKLRLVYDKCNENCGGMDPIPVEQLIPYVDEDGSKNDDRAGPPRFASEERREIVEVNKKLKQKNQQLKQIMDQLRNLIWDINAMLAMRN</sequence>
<feature type="initiator methionine" description="Removed" evidence="2">
    <location>
        <position position="1"/>
    </location>
</feature>
<feature type="chain" id="PRO_0000239407" description="Mediator of RNA polymerase II transcription subunit 30">
    <location>
        <begin position="2"/>
        <end position="178"/>
    </location>
</feature>
<feature type="region of interest" description="Disordered" evidence="4">
    <location>
        <begin position="1"/>
        <end position="22"/>
    </location>
</feature>
<feature type="coiled-coil region" evidence="3">
    <location>
        <begin position="134"/>
        <end position="173"/>
    </location>
</feature>
<feature type="modified residue" description="N-acetylserine" evidence="2">
    <location>
        <position position="2"/>
    </location>
</feature>
<proteinExistence type="evidence at protein level"/>
<protein>
    <recommendedName>
        <fullName>Mediator of RNA polymerase II transcription subunit 30</fullName>
    </recommendedName>
    <alternativeName>
        <fullName>Mediator complex subunit 30</fullName>
    </alternativeName>
    <alternativeName>
        <fullName>Thyroid hormone receptor-associated protein 6</fullName>
    </alternativeName>
    <alternativeName>
        <fullName>Thyroid hormone receptor-associated protein complex 25 kDa component</fullName>
        <shortName>Trap25</shortName>
    </alternativeName>
</protein>
<evidence type="ECO:0000250" key="1"/>
<evidence type="ECO:0000250" key="2">
    <source>
        <dbReference type="UniProtKB" id="Q96HR3"/>
    </source>
</evidence>
<evidence type="ECO:0000255" key="3"/>
<evidence type="ECO:0000256" key="4">
    <source>
        <dbReference type="SAM" id="MobiDB-lite"/>
    </source>
</evidence>
<evidence type="ECO:0000305" key="5"/>
<organism>
    <name type="scientific">Mus musculus</name>
    <name type="common">Mouse</name>
    <dbReference type="NCBI Taxonomy" id="10090"/>
    <lineage>
        <taxon>Eukaryota</taxon>
        <taxon>Metazoa</taxon>
        <taxon>Chordata</taxon>
        <taxon>Craniata</taxon>
        <taxon>Vertebrata</taxon>
        <taxon>Euteleostomi</taxon>
        <taxon>Mammalia</taxon>
        <taxon>Eutheria</taxon>
        <taxon>Euarchontoglires</taxon>
        <taxon>Glires</taxon>
        <taxon>Rodentia</taxon>
        <taxon>Myomorpha</taxon>
        <taxon>Muroidea</taxon>
        <taxon>Muridae</taxon>
        <taxon>Murinae</taxon>
        <taxon>Mus</taxon>
        <taxon>Mus</taxon>
    </lineage>
</organism>
<accession>Q9CQI9</accession>
<dbReference type="EMBL" id="AK007739">
    <property type="protein sequence ID" value="BAB25226.1"/>
    <property type="molecule type" value="mRNA"/>
</dbReference>
<dbReference type="EMBL" id="AK011104">
    <property type="protein sequence ID" value="BAB27401.1"/>
    <property type="molecule type" value="mRNA"/>
</dbReference>
<dbReference type="EMBL" id="AK146250">
    <property type="protein sequence ID" value="BAE27012.1"/>
    <property type="molecule type" value="mRNA"/>
</dbReference>
<dbReference type="EMBL" id="BC020113">
    <property type="protein sequence ID" value="AAH20113.1"/>
    <property type="molecule type" value="mRNA"/>
</dbReference>
<dbReference type="CCDS" id="CCDS27465.1"/>
<dbReference type="RefSeq" id="NP_081488.1">
    <property type="nucleotide sequence ID" value="NM_027212.2"/>
</dbReference>
<dbReference type="PDB" id="6W1S">
    <property type="method" value="EM"/>
    <property type="resolution" value="4.02 A"/>
    <property type="chains" value="Y=27-178"/>
</dbReference>
<dbReference type="PDB" id="8T1I">
    <property type="method" value="EM"/>
    <property type="resolution" value="4.68 A"/>
    <property type="chains" value="Y=1-178"/>
</dbReference>
<dbReference type="PDB" id="8T1L">
    <property type="method" value="EM"/>
    <property type="resolution" value="4.83 A"/>
    <property type="chains" value="Y=1-178"/>
</dbReference>
<dbReference type="PDBsum" id="6W1S"/>
<dbReference type="PDBsum" id="8T1I"/>
<dbReference type="PDBsum" id="8T1L"/>
<dbReference type="EMDB" id="EMD-21514"/>
<dbReference type="EMDB" id="EMD-40968"/>
<dbReference type="EMDB" id="EMD-40971"/>
<dbReference type="SMR" id="Q9CQI9"/>
<dbReference type="BioGRID" id="213682">
    <property type="interactions" value="3"/>
</dbReference>
<dbReference type="ComplexPortal" id="CPX-3264">
    <property type="entry name" value="Core mediator complex"/>
</dbReference>
<dbReference type="FunCoup" id="Q9CQI9">
    <property type="interactions" value="2898"/>
</dbReference>
<dbReference type="IntAct" id="Q9CQI9">
    <property type="interactions" value="15"/>
</dbReference>
<dbReference type="MINT" id="Q9CQI9"/>
<dbReference type="STRING" id="10090.ENSMUSP00000042204"/>
<dbReference type="PhosphoSitePlus" id="Q9CQI9"/>
<dbReference type="PaxDb" id="10090-ENSMUSP00000042204"/>
<dbReference type="PeptideAtlas" id="Q9CQI9"/>
<dbReference type="ProteomicsDB" id="295871"/>
<dbReference type="Pumba" id="Q9CQI9"/>
<dbReference type="Antibodypedia" id="26728">
    <property type="antibodies" value="194 antibodies from 25 providers"/>
</dbReference>
<dbReference type="DNASU" id="69790"/>
<dbReference type="Ensembl" id="ENSMUST00000037115.9">
    <property type="protein sequence ID" value="ENSMUSP00000042204.8"/>
    <property type="gene ID" value="ENSMUSG00000038622.9"/>
</dbReference>
<dbReference type="GeneID" id="69790"/>
<dbReference type="KEGG" id="mmu:69790"/>
<dbReference type="UCSC" id="uc007vrg.1">
    <property type="organism name" value="mouse"/>
</dbReference>
<dbReference type="AGR" id="MGI:1917040"/>
<dbReference type="CTD" id="90390"/>
<dbReference type="MGI" id="MGI:1917040">
    <property type="gene designation" value="Med30"/>
</dbReference>
<dbReference type="VEuPathDB" id="HostDB:ENSMUSG00000038622"/>
<dbReference type="eggNOG" id="ENOG502QV3C">
    <property type="taxonomic scope" value="Eukaryota"/>
</dbReference>
<dbReference type="GeneTree" id="ENSGT00390000010887"/>
<dbReference type="HOGENOM" id="CLU_074190_1_1_1"/>
<dbReference type="InParanoid" id="Q9CQI9"/>
<dbReference type="OMA" id="IWDVNAM"/>
<dbReference type="OrthoDB" id="10067025at2759"/>
<dbReference type="PhylomeDB" id="Q9CQI9"/>
<dbReference type="TreeFam" id="TF324588"/>
<dbReference type="BioGRID-ORCS" id="69790">
    <property type="hits" value="18 hits in 79 CRISPR screens"/>
</dbReference>
<dbReference type="ChiTaRS" id="Med30">
    <property type="organism name" value="mouse"/>
</dbReference>
<dbReference type="PRO" id="PR:Q9CQI9"/>
<dbReference type="Proteomes" id="UP000000589">
    <property type="component" value="Chromosome 15"/>
</dbReference>
<dbReference type="RNAct" id="Q9CQI9">
    <property type="molecule type" value="protein"/>
</dbReference>
<dbReference type="Bgee" id="ENSMUSG00000038622">
    <property type="expression patterns" value="Expressed in medial ganglionic eminence and 258 other cell types or tissues"/>
</dbReference>
<dbReference type="GO" id="GO:0070847">
    <property type="term" value="C:core mediator complex"/>
    <property type="evidence" value="ECO:0000266"/>
    <property type="project" value="ComplexPortal"/>
</dbReference>
<dbReference type="GO" id="GO:0016592">
    <property type="term" value="C:mediator complex"/>
    <property type="evidence" value="ECO:0000314"/>
    <property type="project" value="MGI"/>
</dbReference>
<dbReference type="GO" id="GO:0005654">
    <property type="term" value="C:nucleoplasm"/>
    <property type="evidence" value="ECO:0000304"/>
    <property type="project" value="Reactome"/>
</dbReference>
<dbReference type="GO" id="GO:0005634">
    <property type="term" value="C:nucleus"/>
    <property type="evidence" value="ECO:0000266"/>
    <property type="project" value="ComplexPortal"/>
</dbReference>
<dbReference type="GO" id="GO:0000151">
    <property type="term" value="C:ubiquitin ligase complex"/>
    <property type="evidence" value="ECO:0007669"/>
    <property type="project" value="Ensembl"/>
</dbReference>
<dbReference type="GO" id="GO:0046966">
    <property type="term" value="F:nuclear thyroid hormone receptor binding"/>
    <property type="evidence" value="ECO:0007669"/>
    <property type="project" value="Ensembl"/>
</dbReference>
<dbReference type="GO" id="GO:0003713">
    <property type="term" value="F:transcription coactivator activity"/>
    <property type="evidence" value="ECO:0007669"/>
    <property type="project" value="Ensembl"/>
</dbReference>
<dbReference type="GO" id="GO:0061630">
    <property type="term" value="F:ubiquitin protein ligase activity"/>
    <property type="evidence" value="ECO:0007669"/>
    <property type="project" value="Ensembl"/>
</dbReference>
<dbReference type="GO" id="GO:0032968">
    <property type="term" value="P:positive regulation of transcription elongation by RNA polymerase II"/>
    <property type="evidence" value="ECO:0000303"/>
    <property type="project" value="ComplexPortal"/>
</dbReference>
<dbReference type="GO" id="GO:0060261">
    <property type="term" value="P:positive regulation of transcription initiation by RNA polymerase II"/>
    <property type="evidence" value="ECO:0000303"/>
    <property type="project" value="ComplexPortal"/>
</dbReference>
<dbReference type="GO" id="GO:0016567">
    <property type="term" value="P:protein ubiquitination"/>
    <property type="evidence" value="ECO:0007669"/>
    <property type="project" value="Ensembl"/>
</dbReference>
<dbReference type="GO" id="GO:0051123">
    <property type="term" value="P:RNA polymerase II preinitiation complex assembly"/>
    <property type="evidence" value="ECO:0000303"/>
    <property type="project" value="ComplexPortal"/>
</dbReference>
<dbReference type="GO" id="GO:0035019">
    <property type="term" value="P:somatic stem cell population maintenance"/>
    <property type="evidence" value="ECO:0000315"/>
    <property type="project" value="MGI"/>
</dbReference>
<dbReference type="InterPro" id="IPR021019">
    <property type="entry name" value="Mediator_Med30_met"/>
</dbReference>
<dbReference type="PANTHER" id="PTHR31705">
    <property type="entry name" value="MEDIATOR OF RNA POLYMERASE II TRANSCRIPTION SUBUNIT 30"/>
    <property type="match status" value="1"/>
</dbReference>
<dbReference type="PANTHER" id="PTHR31705:SF4">
    <property type="entry name" value="MEDIATOR OF RNA POLYMERASE II TRANSCRIPTION SUBUNIT 30"/>
    <property type="match status" value="1"/>
</dbReference>
<dbReference type="Pfam" id="PF11315">
    <property type="entry name" value="Med30"/>
    <property type="match status" value="1"/>
</dbReference>
<gene>
    <name type="primary">Med30</name>
    <name type="synonym">Thrap6</name>
    <name type="synonym">Trap25</name>
</gene>
<comment type="function">
    <text evidence="1">Component of the Mediator complex, a coactivator involved in the regulated transcription of nearly all RNA polymerase II-dependent genes. Mediator functions as a bridge to convey information from gene-specific regulatory proteins to the basal RNA polymerase II transcription machinery. Mediator is recruited to promoters by direct interactions with regulatory proteins and serves as a scaffold for the assembly of a functional preinitiation complex with RNA polymerase II and the general transcription factors (By similarity).</text>
</comment>
<comment type="subunit">
    <text evidence="1">Component of the Mediator complex, which is composed of MED1, MED4, MED6, MED7, MED8, MED9, MED10, MED11, MED12, MED13, MED13L, MED14, MED15, MED16, MED17, MED18, MED19, MED20, MED21, MED22, MED23, MED24, MED25, MED26, MED27, MED29, MED30, MED31, CCNC, CDK8 and CDC2L6/CDK11. The MED12, MED13, CCNC and CDK8 subunits form a distinct module termed the CDK8 module. Mediator containing the CDK8 module is less active than Mediator lacking this module in supporting transcriptional activation. Individual preparations of the Mediator complex lacking one or more distinct subunits have been variously termed ARC, CRSP, DRIP, PC2, SMCC and TRAP (By similarity).</text>
</comment>
<comment type="interaction">
    <interactant intactId="EBI-309220">
        <id>Q9CQI9</id>
    </interactant>
    <interactant intactId="EBI-398698">
        <id>Q9R0X0</id>
        <label>Med20</label>
    </interactant>
    <organismsDiffer>false</organismsDiffer>
    <experiments>2</experiments>
</comment>
<comment type="interaction">
    <interactant intactId="EBI-309220">
        <id>Q9CQI9</id>
    </interactant>
    <interactant intactId="EBI-7990252">
        <id>Q9D7W5</id>
        <label>Med8</label>
    </interactant>
    <organismsDiffer>false</organismsDiffer>
    <experiments>2</experiments>
</comment>
<comment type="interaction">
    <interactant intactId="EBI-309220">
        <id>Q9CQI9</id>
    </interactant>
    <interactant intactId="EBI-394562">
        <id>Q9NVC6</id>
        <label>MED17</label>
    </interactant>
    <organismsDiffer>true</organismsDiffer>
    <experiments>2</experiments>
</comment>
<comment type="interaction">
    <interactant intactId="EBI-309220">
        <id>Q9CQI9</id>
    </interactant>
    <interactant intactId="EBI-394687">
        <id>Q15528</id>
        <label>MED22</label>
    </interactant>
    <organismsDiffer>true</organismsDiffer>
    <experiments>6</experiments>
</comment>
<comment type="interaction">
    <interactant intactId="EBI-309220">
        <id>Q9CQI9</id>
    </interactant>
    <interactant intactId="EBI-394603">
        <id>Q6P2C8</id>
        <label>MED27</label>
    </interactant>
    <organismsDiffer>true</organismsDiffer>
    <experiments>2</experiments>
</comment>
<comment type="interaction">
    <interactant intactId="EBI-309220">
        <id>Q9CQI9</id>
    </interactant>
    <interactant intactId="EBI-514199">
        <id>Q9H204</id>
        <label>MED28</label>
    </interactant>
    <organismsDiffer>true</organismsDiffer>
    <experiments>2</experiments>
</comment>
<comment type="interaction">
    <interactant intactId="EBI-309220">
        <id>Q9CQI9</id>
    </interactant>
    <interactant intactId="EBI-394656">
        <id>Q9NX70</id>
        <label>MED29</label>
    </interactant>
    <organismsDiffer>true</organismsDiffer>
    <experiments>2</experiments>
</comment>
<comment type="subcellular location">
    <subcellularLocation>
        <location evidence="5">Nucleus</location>
    </subcellularLocation>
</comment>
<comment type="similarity">
    <text evidence="5">Belongs to the Mediator complex subunit 30 family.</text>
</comment>
<name>MED30_MOUSE</name>